<name>KHSE_YERPG</name>
<comment type="function">
    <text evidence="1">Catalyzes the ATP-dependent phosphorylation of L-homoserine to L-homoserine phosphate.</text>
</comment>
<comment type="catalytic activity">
    <reaction evidence="1">
        <text>L-homoserine + ATP = O-phospho-L-homoserine + ADP + H(+)</text>
        <dbReference type="Rhea" id="RHEA:13985"/>
        <dbReference type="ChEBI" id="CHEBI:15378"/>
        <dbReference type="ChEBI" id="CHEBI:30616"/>
        <dbReference type="ChEBI" id="CHEBI:57476"/>
        <dbReference type="ChEBI" id="CHEBI:57590"/>
        <dbReference type="ChEBI" id="CHEBI:456216"/>
        <dbReference type="EC" id="2.7.1.39"/>
    </reaction>
</comment>
<comment type="pathway">
    <text evidence="1">Amino-acid biosynthesis; L-threonine biosynthesis; L-threonine from L-aspartate: step 4/5.</text>
</comment>
<comment type="subcellular location">
    <subcellularLocation>
        <location evidence="1">Cytoplasm</location>
    </subcellularLocation>
</comment>
<comment type="similarity">
    <text evidence="1">Belongs to the GHMP kinase family. Homoserine kinase subfamily.</text>
</comment>
<evidence type="ECO:0000255" key="1">
    <source>
        <dbReference type="HAMAP-Rule" id="MF_00384"/>
    </source>
</evidence>
<keyword id="KW-0028">Amino-acid biosynthesis</keyword>
<keyword id="KW-0067">ATP-binding</keyword>
<keyword id="KW-0963">Cytoplasm</keyword>
<keyword id="KW-0418">Kinase</keyword>
<keyword id="KW-0547">Nucleotide-binding</keyword>
<keyword id="KW-0791">Threonine biosynthesis</keyword>
<keyword id="KW-0808">Transferase</keyword>
<proteinExistence type="inferred from homology"/>
<reference key="1">
    <citation type="journal article" date="2010" name="J. Bacteriol.">
        <title>Genome sequence of the deep-rooted Yersinia pestis strain Angola reveals new insights into the evolution and pangenome of the plague bacterium.</title>
        <authorList>
            <person name="Eppinger M."/>
            <person name="Worsham P.L."/>
            <person name="Nikolich M.P."/>
            <person name="Riley D.R."/>
            <person name="Sebastian Y."/>
            <person name="Mou S."/>
            <person name="Achtman M."/>
            <person name="Lindler L.E."/>
            <person name="Ravel J."/>
        </authorList>
    </citation>
    <scope>NUCLEOTIDE SEQUENCE [LARGE SCALE GENOMIC DNA]</scope>
    <source>
        <strain>Angola</strain>
    </source>
</reference>
<feature type="chain" id="PRO_1000122455" description="Homoserine kinase">
    <location>
        <begin position="1"/>
        <end position="309"/>
    </location>
</feature>
<feature type="binding site" evidence="1">
    <location>
        <begin position="91"/>
        <end position="101"/>
    </location>
    <ligand>
        <name>ATP</name>
        <dbReference type="ChEBI" id="CHEBI:30616"/>
    </ligand>
</feature>
<organism>
    <name type="scientific">Yersinia pestis bv. Antiqua (strain Angola)</name>
    <dbReference type="NCBI Taxonomy" id="349746"/>
    <lineage>
        <taxon>Bacteria</taxon>
        <taxon>Pseudomonadati</taxon>
        <taxon>Pseudomonadota</taxon>
        <taxon>Gammaproteobacteria</taxon>
        <taxon>Enterobacterales</taxon>
        <taxon>Yersiniaceae</taxon>
        <taxon>Yersinia</taxon>
    </lineage>
</organism>
<sequence>MVKIYAPASIGNVSVGFDVLGAAVSPIDGTLLGDCVSVTAAERFSLHNEGRFVSKLPDDPKQNIVYQCWERFCQEMGKEIPVAMVLEKNMPIGSGLGSSACSVVAGLMAMNEFCGQPLDKVTLLGMMGELEGRVSGSIHFDNVAPCYLGGMQLILEQEGYISQDVPGFSDWLWVMAYPGIKVSTAEARAILPAQYRRQDCITHGRNLAGFIHACHTQQPDLAAKMMKDVIAEPYRTQLLPGFAAARQAAQDIGALACGISGSGPTLFAVCNDQATAQRMAGWLQNHYLQNDEGFVHICRLDTAGARLLG</sequence>
<protein>
    <recommendedName>
        <fullName evidence="1">Homoserine kinase</fullName>
        <shortName evidence="1">HK</shortName>
        <shortName evidence="1">HSK</shortName>
        <ecNumber evidence="1">2.7.1.39</ecNumber>
    </recommendedName>
</protein>
<dbReference type="EC" id="2.7.1.39" evidence="1"/>
<dbReference type="EMBL" id="CP000901">
    <property type="protein sequence ID" value="ABX85875.1"/>
    <property type="molecule type" value="Genomic_DNA"/>
</dbReference>
<dbReference type="RefSeq" id="WP_002209238.1">
    <property type="nucleotide sequence ID" value="NZ_CP009935.1"/>
</dbReference>
<dbReference type="SMR" id="A9R025"/>
<dbReference type="GeneID" id="96664104"/>
<dbReference type="KEGG" id="ypg:YpAngola_A0807"/>
<dbReference type="PATRIC" id="fig|349746.12.peg.1757"/>
<dbReference type="UniPathway" id="UPA00050">
    <property type="reaction ID" value="UER00064"/>
</dbReference>
<dbReference type="GO" id="GO:0005737">
    <property type="term" value="C:cytoplasm"/>
    <property type="evidence" value="ECO:0007669"/>
    <property type="project" value="UniProtKB-SubCell"/>
</dbReference>
<dbReference type="GO" id="GO:0005524">
    <property type="term" value="F:ATP binding"/>
    <property type="evidence" value="ECO:0007669"/>
    <property type="project" value="UniProtKB-UniRule"/>
</dbReference>
<dbReference type="GO" id="GO:0004413">
    <property type="term" value="F:homoserine kinase activity"/>
    <property type="evidence" value="ECO:0007669"/>
    <property type="project" value="UniProtKB-UniRule"/>
</dbReference>
<dbReference type="GO" id="GO:0009088">
    <property type="term" value="P:threonine biosynthetic process"/>
    <property type="evidence" value="ECO:0007669"/>
    <property type="project" value="UniProtKB-UniRule"/>
</dbReference>
<dbReference type="FunFam" id="3.30.230.10:FF:000020">
    <property type="entry name" value="Homoserine kinase"/>
    <property type="match status" value="1"/>
</dbReference>
<dbReference type="FunFam" id="3.30.70.890:FF:000002">
    <property type="entry name" value="Homoserine kinase"/>
    <property type="match status" value="1"/>
</dbReference>
<dbReference type="Gene3D" id="3.30.230.10">
    <property type="match status" value="1"/>
</dbReference>
<dbReference type="Gene3D" id="3.30.70.890">
    <property type="entry name" value="GHMP kinase, C-terminal domain"/>
    <property type="match status" value="1"/>
</dbReference>
<dbReference type="HAMAP" id="MF_00384">
    <property type="entry name" value="Homoser_kinase"/>
    <property type="match status" value="1"/>
</dbReference>
<dbReference type="InterPro" id="IPR013750">
    <property type="entry name" value="GHMP_kinase_C_dom"/>
</dbReference>
<dbReference type="InterPro" id="IPR036554">
    <property type="entry name" value="GHMP_kinase_C_sf"/>
</dbReference>
<dbReference type="InterPro" id="IPR006204">
    <property type="entry name" value="GHMP_kinase_N_dom"/>
</dbReference>
<dbReference type="InterPro" id="IPR006203">
    <property type="entry name" value="GHMP_knse_ATP-bd_CS"/>
</dbReference>
<dbReference type="InterPro" id="IPR000870">
    <property type="entry name" value="Homoserine_kinase"/>
</dbReference>
<dbReference type="InterPro" id="IPR020568">
    <property type="entry name" value="Ribosomal_Su5_D2-typ_SF"/>
</dbReference>
<dbReference type="InterPro" id="IPR014721">
    <property type="entry name" value="Ribsml_uS5_D2-typ_fold_subgr"/>
</dbReference>
<dbReference type="NCBIfam" id="NF002288">
    <property type="entry name" value="PRK01212.1-4"/>
    <property type="match status" value="1"/>
</dbReference>
<dbReference type="NCBIfam" id="TIGR00191">
    <property type="entry name" value="thrB"/>
    <property type="match status" value="1"/>
</dbReference>
<dbReference type="PANTHER" id="PTHR20861:SF1">
    <property type="entry name" value="HOMOSERINE KINASE"/>
    <property type="match status" value="1"/>
</dbReference>
<dbReference type="PANTHER" id="PTHR20861">
    <property type="entry name" value="HOMOSERINE/4-DIPHOSPHOCYTIDYL-2-C-METHYL-D-ERYTHRITOL KINASE"/>
    <property type="match status" value="1"/>
</dbReference>
<dbReference type="Pfam" id="PF08544">
    <property type="entry name" value="GHMP_kinases_C"/>
    <property type="match status" value="1"/>
</dbReference>
<dbReference type="Pfam" id="PF00288">
    <property type="entry name" value="GHMP_kinases_N"/>
    <property type="match status" value="1"/>
</dbReference>
<dbReference type="PIRSF" id="PIRSF000676">
    <property type="entry name" value="Homoser_kin"/>
    <property type="match status" value="1"/>
</dbReference>
<dbReference type="PRINTS" id="PR00958">
    <property type="entry name" value="HOMSERKINASE"/>
</dbReference>
<dbReference type="SUPFAM" id="SSF55060">
    <property type="entry name" value="GHMP Kinase, C-terminal domain"/>
    <property type="match status" value="1"/>
</dbReference>
<dbReference type="SUPFAM" id="SSF54211">
    <property type="entry name" value="Ribosomal protein S5 domain 2-like"/>
    <property type="match status" value="1"/>
</dbReference>
<dbReference type="PROSITE" id="PS00627">
    <property type="entry name" value="GHMP_KINASES_ATP"/>
    <property type="match status" value="1"/>
</dbReference>
<accession>A9R025</accession>
<gene>
    <name evidence="1" type="primary">thrB</name>
    <name type="ordered locus">YpAngola_A0807</name>
</gene>